<keyword id="KW-0011">Acute phase</keyword>
<keyword id="KW-0106">Calcium</keyword>
<keyword id="KW-0903">Direct protein sequencing</keyword>
<keyword id="KW-1015">Disulfide bond</keyword>
<keyword id="KW-0325">Glycoprotein</keyword>
<keyword id="KW-0479">Metal-binding</keyword>
<keyword id="KW-1185">Reference proteome</keyword>
<keyword id="KW-0964">Secreted</keyword>
<keyword id="KW-0732">Signal</keyword>
<reference key="1">
    <citation type="journal article" date="1992" name="J. Biol. Chem.">
        <title>Derivation of the amino acid sequence of rat C-reactive protein from cDNA cloning with additional studies on the nature of its dimeric component.</title>
        <authorList>
            <person name="Rassouli M."/>
            <person name="Sambasivam H."/>
            <person name="Azadi P."/>
            <person name="Dell A."/>
            <person name="Morris H.R."/>
            <person name="Nagpurkar A."/>
            <person name="Mookerjea S."/>
            <person name="Murray R.K."/>
        </authorList>
    </citation>
    <scope>NUCLEOTIDE SEQUENCE [MRNA]</scope>
    <scope>PARTIAL PROTEIN SEQUENCE</scope>
    <source>
        <strain>Sprague-Dawley</strain>
        <tissue>Liver</tissue>
    </source>
</reference>
<reference key="2">
    <citation type="journal article" date="2004" name="Genome Res.">
        <title>The status, quality, and expansion of the NIH full-length cDNA project: the Mammalian Gene Collection (MGC).</title>
        <authorList>
            <consortium name="The MGC Project Team"/>
        </authorList>
    </citation>
    <scope>NUCLEOTIDE SEQUENCE [LARGE SCALE MRNA]</scope>
    <source>
        <tissue>Spleen</tissue>
    </source>
</reference>
<reference key="3">
    <citation type="submission" date="2007-09" db="UniProtKB">
        <authorList>
            <person name="Lubec G."/>
            <person name="Kang S.U."/>
            <person name="Lubec S."/>
        </authorList>
    </citation>
    <scope>PROTEIN SEQUENCE OF 65-74 AND 196-205</scope>
    <scope>IDENTIFICATION BY MASS SPECTROMETRY</scope>
    <source>
        <strain>Sprague-Dawley</strain>
        <tissue>Brain</tissue>
    </source>
</reference>
<dbReference type="EMBL" id="M83176">
    <property type="protein sequence ID" value="AAA40964.1"/>
    <property type="molecule type" value="mRNA"/>
</dbReference>
<dbReference type="EMBL" id="BC091157">
    <property type="protein sequence ID" value="AAH91157.1"/>
    <property type="molecule type" value="mRNA"/>
</dbReference>
<dbReference type="PIR" id="A42579">
    <property type="entry name" value="A42579"/>
</dbReference>
<dbReference type="RefSeq" id="NP_058792.1">
    <property type="nucleotide sequence ID" value="NM_017096.4"/>
</dbReference>
<dbReference type="SMR" id="P48199"/>
<dbReference type="BioGRID" id="247454">
    <property type="interactions" value="1"/>
</dbReference>
<dbReference type="FunCoup" id="P48199">
    <property type="interactions" value="21"/>
</dbReference>
<dbReference type="IntAct" id="P48199">
    <property type="interactions" value="1"/>
</dbReference>
<dbReference type="MINT" id="P48199"/>
<dbReference type="STRING" id="10116.ENSRNOP00000074751"/>
<dbReference type="GlyConnect" id="114">
    <property type="glycosylation" value="2 N-Linked glycans (1 site)"/>
</dbReference>
<dbReference type="GlyCosmos" id="P48199">
    <property type="glycosylation" value="1 site, 4 glycans"/>
</dbReference>
<dbReference type="GlyGen" id="P48199">
    <property type="glycosylation" value="1 site, 4 N-linked glycans (1 site)"/>
</dbReference>
<dbReference type="iPTMnet" id="P48199"/>
<dbReference type="PhosphoSitePlus" id="P48199"/>
<dbReference type="PaxDb" id="10116-ENSRNOP00000000058"/>
<dbReference type="GeneID" id="25419"/>
<dbReference type="KEGG" id="rno:25419"/>
<dbReference type="UCSC" id="RGD:2411">
    <property type="organism name" value="rat"/>
</dbReference>
<dbReference type="AGR" id="RGD:2411"/>
<dbReference type="CTD" id="1401"/>
<dbReference type="RGD" id="2411">
    <property type="gene designation" value="Crp"/>
</dbReference>
<dbReference type="VEuPathDB" id="HostDB:ENSRNOG00000000053"/>
<dbReference type="eggNOG" id="ENOG502S201">
    <property type="taxonomic scope" value="Eukaryota"/>
</dbReference>
<dbReference type="HOGENOM" id="CLU_032051_2_0_1"/>
<dbReference type="InParanoid" id="P48199"/>
<dbReference type="PhylomeDB" id="P48199"/>
<dbReference type="TreeFam" id="TF330208"/>
<dbReference type="Reactome" id="R-RNO-173623">
    <property type="pathway name" value="Classical antibody-mediated complement activation"/>
</dbReference>
<dbReference type="PRO" id="PR:P48199"/>
<dbReference type="Proteomes" id="UP000002494">
    <property type="component" value="Chromosome 13"/>
</dbReference>
<dbReference type="Bgee" id="ENSRNOG00000000053">
    <property type="expression patterns" value="Expressed in liver and 17 other cell types or tissues"/>
</dbReference>
<dbReference type="ExpressionAtlas" id="P48199">
    <property type="expression patterns" value="baseline and differential"/>
</dbReference>
<dbReference type="GO" id="GO:0005615">
    <property type="term" value="C:extracellular space"/>
    <property type="evidence" value="ECO:0000314"/>
    <property type="project" value="RGD"/>
</dbReference>
<dbReference type="GO" id="GO:0030175">
    <property type="term" value="C:filopodium"/>
    <property type="evidence" value="ECO:0000314"/>
    <property type="project" value="RGD"/>
</dbReference>
<dbReference type="GO" id="GO:0030426">
    <property type="term" value="C:growth cone"/>
    <property type="evidence" value="ECO:0000314"/>
    <property type="project" value="RGD"/>
</dbReference>
<dbReference type="GO" id="GO:0005509">
    <property type="term" value="F:calcium ion binding"/>
    <property type="evidence" value="ECO:0000266"/>
    <property type="project" value="RGD"/>
</dbReference>
<dbReference type="GO" id="GO:0015485">
    <property type="term" value="F:cholesterol binding"/>
    <property type="evidence" value="ECO:0000314"/>
    <property type="project" value="RGD"/>
</dbReference>
<dbReference type="GO" id="GO:0001849">
    <property type="term" value="F:complement component C1q complex binding"/>
    <property type="evidence" value="ECO:0000266"/>
    <property type="project" value="RGD"/>
</dbReference>
<dbReference type="GO" id="GO:0042802">
    <property type="term" value="F:identical protein binding"/>
    <property type="evidence" value="ECO:0000353"/>
    <property type="project" value="RGD"/>
</dbReference>
<dbReference type="GO" id="GO:0030169">
    <property type="term" value="F:low-density lipoprotein particle binding"/>
    <property type="evidence" value="ECO:0000314"/>
    <property type="project" value="RGD"/>
</dbReference>
<dbReference type="GO" id="GO:0050750">
    <property type="term" value="F:low-density lipoprotein particle receptor binding"/>
    <property type="evidence" value="ECO:0000266"/>
    <property type="project" value="RGD"/>
</dbReference>
<dbReference type="GO" id="GO:0006953">
    <property type="term" value="P:acute-phase response"/>
    <property type="evidence" value="ECO:0000270"/>
    <property type="project" value="RGD"/>
</dbReference>
<dbReference type="GO" id="GO:0071277">
    <property type="term" value="P:cellular response to calcium ion"/>
    <property type="evidence" value="ECO:0000314"/>
    <property type="project" value="RGD"/>
</dbReference>
<dbReference type="GO" id="GO:0071354">
    <property type="term" value="P:cellular response to interleukin-6"/>
    <property type="evidence" value="ECO:0000270"/>
    <property type="project" value="RGD"/>
</dbReference>
<dbReference type="GO" id="GO:0071732">
    <property type="term" value="P:cellular response to nitric oxide"/>
    <property type="evidence" value="ECO:0000270"/>
    <property type="project" value="RGD"/>
</dbReference>
<dbReference type="GO" id="GO:0006958">
    <property type="term" value="P:complement activation, classical pathway"/>
    <property type="evidence" value="ECO:0000315"/>
    <property type="project" value="RGD"/>
</dbReference>
<dbReference type="GO" id="GO:0045087">
    <property type="term" value="P:innate immune response"/>
    <property type="evidence" value="ECO:0000318"/>
    <property type="project" value="GO_Central"/>
</dbReference>
<dbReference type="GO" id="GO:0010888">
    <property type="term" value="P:negative regulation of lipid storage"/>
    <property type="evidence" value="ECO:0000266"/>
    <property type="project" value="RGD"/>
</dbReference>
<dbReference type="GO" id="GO:0010745">
    <property type="term" value="P:negative regulation of macrophage derived foam cell differentiation"/>
    <property type="evidence" value="ECO:0000266"/>
    <property type="project" value="RGD"/>
</dbReference>
<dbReference type="GO" id="GO:0032945">
    <property type="term" value="P:negative regulation of mononuclear cell proliferation"/>
    <property type="evidence" value="ECO:0000266"/>
    <property type="project" value="RGD"/>
</dbReference>
<dbReference type="GO" id="GO:0032929">
    <property type="term" value="P:negative regulation of superoxide anion generation"/>
    <property type="evidence" value="ECO:0000314"/>
    <property type="project" value="RGD"/>
</dbReference>
<dbReference type="GO" id="GO:1900006">
    <property type="term" value="P:positive regulation of dendrite development"/>
    <property type="evidence" value="ECO:0000315"/>
    <property type="project" value="RGD"/>
</dbReference>
<dbReference type="GO" id="GO:0010628">
    <property type="term" value="P:positive regulation of gene expression"/>
    <property type="evidence" value="ECO:0000266"/>
    <property type="project" value="RGD"/>
</dbReference>
<dbReference type="GO" id="GO:0045429">
    <property type="term" value="P:positive regulation of nitric oxide biosynthetic process"/>
    <property type="evidence" value="ECO:0000314"/>
    <property type="project" value="RGD"/>
</dbReference>
<dbReference type="GO" id="GO:0032930">
    <property type="term" value="P:positive regulation of superoxide anion generation"/>
    <property type="evidence" value="ECO:0000266"/>
    <property type="project" value="RGD"/>
</dbReference>
<dbReference type="GO" id="GO:0051258">
    <property type="term" value="P:protein polymerization"/>
    <property type="evidence" value="ECO:0000314"/>
    <property type="project" value="RGD"/>
</dbReference>
<dbReference type="GO" id="GO:0032677">
    <property type="term" value="P:regulation of interleukin-8 production"/>
    <property type="evidence" value="ECO:0000250"/>
    <property type="project" value="UniProtKB"/>
</dbReference>
<dbReference type="GO" id="GO:0010988">
    <property type="term" value="P:regulation of low-density lipoprotein particle clearance"/>
    <property type="evidence" value="ECO:0000314"/>
    <property type="project" value="RGD"/>
</dbReference>
<dbReference type="GO" id="GO:0032355">
    <property type="term" value="P:response to estradiol"/>
    <property type="evidence" value="ECO:0000270"/>
    <property type="project" value="RGD"/>
</dbReference>
<dbReference type="GO" id="GO:0045471">
    <property type="term" value="P:response to ethanol"/>
    <property type="evidence" value="ECO:0000270"/>
    <property type="project" value="RGD"/>
</dbReference>
<dbReference type="GO" id="GO:0001666">
    <property type="term" value="P:response to hypoxia"/>
    <property type="evidence" value="ECO:0000270"/>
    <property type="project" value="RGD"/>
</dbReference>
<dbReference type="GO" id="GO:0010288">
    <property type="term" value="P:response to lead ion"/>
    <property type="evidence" value="ECO:0000270"/>
    <property type="project" value="RGD"/>
</dbReference>
<dbReference type="GO" id="GO:0031667">
    <property type="term" value="P:response to nutrient levels"/>
    <property type="evidence" value="ECO:0000270"/>
    <property type="project" value="RGD"/>
</dbReference>
<dbReference type="GO" id="GO:0033574">
    <property type="term" value="P:response to testosterone"/>
    <property type="evidence" value="ECO:0000270"/>
    <property type="project" value="RGD"/>
</dbReference>
<dbReference type="GO" id="GO:0042310">
    <property type="term" value="P:vasoconstriction"/>
    <property type="evidence" value="ECO:0000266"/>
    <property type="project" value="RGD"/>
</dbReference>
<dbReference type="CDD" id="cd00152">
    <property type="entry name" value="PTX"/>
    <property type="match status" value="1"/>
</dbReference>
<dbReference type="FunFam" id="2.60.120.200:FF:000070">
    <property type="entry name" value="Serum amyloid P-component"/>
    <property type="match status" value="1"/>
</dbReference>
<dbReference type="Gene3D" id="2.60.120.200">
    <property type="match status" value="1"/>
</dbReference>
<dbReference type="InterPro" id="IPR013320">
    <property type="entry name" value="ConA-like_dom_sf"/>
</dbReference>
<dbReference type="InterPro" id="IPR030476">
    <property type="entry name" value="Pentaxin_CS"/>
</dbReference>
<dbReference type="InterPro" id="IPR001759">
    <property type="entry name" value="Pentraxin-related"/>
</dbReference>
<dbReference type="InterPro" id="IPR051005">
    <property type="entry name" value="Pentraxin_domain"/>
</dbReference>
<dbReference type="PANTHER" id="PTHR45869:SF7">
    <property type="entry name" value="C-REACTIVE PROTEIN"/>
    <property type="match status" value="1"/>
</dbReference>
<dbReference type="PANTHER" id="PTHR45869">
    <property type="entry name" value="C-REACTIVE PROTEIN-RELATED"/>
    <property type="match status" value="1"/>
</dbReference>
<dbReference type="Pfam" id="PF00354">
    <property type="entry name" value="Pentaxin"/>
    <property type="match status" value="1"/>
</dbReference>
<dbReference type="PRINTS" id="PR00895">
    <property type="entry name" value="PENTAXIN"/>
</dbReference>
<dbReference type="SMART" id="SM00159">
    <property type="entry name" value="PTX"/>
    <property type="match status" value="1"/>
</dbReference>
<dbReference type="SUPFAM" id="SSF49899">
    <property type="entry name" value="Concanavalin A-like lectins/glucanases"/>
    <property type="match status" value="1"/>
</dbReference>
<dbReference type="PROSITE" id="PS00289">
    <property type="entry name" value="PTX_1"/>
    <property type="match status" value="1"/>
</dbReference>
<dbReference type="PROSITE" id="PS51828">
    <property type="entry name" value="PTX_2"/>
    <property type="match status" value="1"/>
</dbReference>
<sequence length="230" mass="25468">MEKLLWCLLITISFSQAFGHEDMSKQAFVFPGVSATAYVSLEAESKKPLEAFTVCLYAHADVSRSFSIFSYATKTSFNEILLFWTRGQGFSIAVGGPEILFSASEIPEVPTHICATWESATGIVELWLDGKPRVRKSLQKGYIVGTNASIILGQEQDSYGGGFDANQSLVGDIGDVNMWDFVLSPEQINAVYVGRVFSPNVLNWRALKYETHGDVFIKPQLWPLTDCCES</sequence>
<name>CRP_RAT</name>
<evidence type="ECO:0000250" key="1"/>
<evidence type="ECO:0000255" key="2">
    <source>
        <dbReference type="PROSITE-ProRule" id="PRU01172"/>
    </source>
</evidence>
<evidence type="ECO:0000305" key="3"/>
<proteinExistence type="evidence at protein level"/>
<organism>
    <name type="scientific">Rattus norvegicus</name>
    <name type="common">Rat</name>
    <dbReference type="NCBI Taxonomy" id="10116"/>
    <lineage>
        <taxon>Eukaryota</taxon>
        <taxon>Metazoa</taxon>
        <taxon>Chordata</taxon>
        <taxon>Craniata</taxon>
        <taxon>Vertebrata</taxon>
        <taxon>Euteleostomi</taxon>
        <taxon>Mammalia</taxon>
        <taxon>Eutheria</taxon>
        <taxon>Euarchontoglires</taxon>
        <taxon>Glires</taxon>
        <taxon>Rodentia</taxon>
        <taxon>Myomorpha</taxon>
        <taxon>Muroidea</taxon>
        <taxon>Muridae</taxon>
        <taxon>Murinae</taxon>
        <taxon>Rattus</taxon>
    </lineage>
</organism>
<protein>
    <recommendedName>
        <fullName>C-reactive protein</fullName>
    </recommendedName>
</protein>
<comment type="function">
    <text evidence="1">Displays several functions associated with host defense: it promotes agglutination, bacterial capsular swelling, phagocytosis and complement fixation through its calcium-dependent binding to phosphorylcholine. Can interact with DNA and histones and may scavenge nuclear material released from damaged circulating cells (By similarity).</text>
</comment>
<comment type="cofactor">
    <cofactor evidence="1">
        <name>Ca(2+)</name>
        <dbReference type="ChEBI" id="CHEBI:29108"/>
    </cofactor>
    <text evidence="1">Binds 2 calcium ions per subunit.</text>
</comment>
<comment type="subunit">
    <text evidence="1">Homopentamer; disulfide-linked. Pentraxin (or pentaxin) have a discoid arrangement of 5 non-covalently bound subunits. Two of the five chains form a dimer linked by two interchain disulfide bonds located in the C-terminal heptapeptide and specific to rat CRP. Interacts with FCN1; may regulate monocyte activation by FCN1 (By similarity).</text>
</comment>
<comment type="subcellular location">
    <subcellularLocation>
        <location>Secreted</location>
    </subcellularLocation>
</comment>
<comment type="tissue specificity">
    <text>Found in plasma.</text>
</comment>
<comment type="PTM">
    <text>The last two cysteines are involved either in interchain disulfide bonds or in an intrachain bond.</text>
</comment>
<comment type="similarity">
    <text evidence="3">Belongs to the pentraxin family.</text>
</comment>
<comment type="online information" name="Protein Spotlight">
    <link uri="https://www.proteinspotlight.org/back_issues/030"/>
    <text>No more Christmas pudding? - Issue 30 of January 2003</text>
</comment>
<accession>P48199</accession>
<accession>Q5BK94</accession>
<feature type="signal peptide" evidence="1">
    <location>
        <begin position="1"/>
        <end position="19"/>
    </location>
</feature>
<feature type="chain" id="PRO_0000023532" description="C-reactive protein">
    <location>
        <begin position="20"/>
        <end position="230"/>
    </location>
</feature>
<feature type="domain" description="Pentraxin (PTX)" evidence="2">
    <location>
        <begin position="24"/>
        <end position="223"/>
    </location>
</feature>
<feature type="binding site" evidence="1">
    <location>
        <position position="78"/>
    </location>
    <ligand>
        <name>Ca(2+)</name>
        <dbReference type="ChEBI" id="CHEBI:29108"/>
        <label>1</label>
    </ligand>
</feature>
<feature type="binding site" evidence="1">
    <location>
        <position position="155"/>
    </location>
    <ligand>
        <name>Ca(2+)</name>
        <dbReference type="ChEBI" id="CHEBI:29108"/>
        <label>1</label>
    </ligand>
</feature>
<feature type="binding site" evidence="2">
    <location>
        <position position="155"/>
    </location>
    <ligand>
        <name>Ca(2+)</name>
        <dbReference type="ChEBI" id="CHEBI:29108"/>
        <label>2</label>
    </ligand>
</feature>
<feature type="binding site" evidence="1">
    <location>
        <position position="156"/>
    </location>
    <ligand>
        <name>Ca(2+)</name>
        <dbReference type="ChEBI" id="CHEBI:29108"/>
        <label>1</label>
    </ligand>
</feature>
<feature type="binding site" evidence="1">
    <location>
        <position position="157"/>
    </location>
    <ligand>
        <name>Ca(2+)</name>
        <dbReference type="ChEBI" id="CHEBI:29108"/>
        <label>1</label>
    </ligand>
</feature>
<feature type="binding site" evidence="2">
    <location>
        <position position="157"/>
    </location>
    <ligand>
        <name>Ca(2+)</name>
        <dbReference type="ChEBI" id="CHEBI:29108"/>
        <label>2</label>
    </ligand>
</feature>
<feature type="binding site" evidence="2">
    <location>
        <position position="167"/>
    </location>
    <ligand>
        <name>Ca(2+)</name>
        <dbReference type="ChEBI" id="CHEBI:29108"/>
        <label>2</label>
    </ligand>
</feature>
<feature type="glycosylation site" id="CAR_000154" description="N-linked (GlcNAc...) asparagine">
    <location>
        <position position="147"/>
    </location>
</feature>
<feature type="disulfide bond" evidence="2">
    <location>
        <begin position="55"/>
        <end position="114"/>
    </location>
</feature>
<feature type="disulfide bond" description="In monomeric form">
    <location>
        <begin position="227"/>
        <end position="228"/>
    </location>
</feature>
<feature type="disulfide bond" description="Interchain; in polymeric form">
    <location>
        <position position="227"/>
    </location>
</feature>
<feature type="disulfide bond" description="Interchain; in polymeric form">
    <location>
        <position position="228"/>
    </location>
</feature>
<gene>
    <name type="primary">Crp</name>
    <name type="synonym">Ptx1</name>
</gene>